<evidence type="ECO:0000255" key="1">
    <source>
        <dbReference type="PROSITE-ProRule" id="PRU00108"/>
    </source>
</evidence>
<evidence type="ECO:0000256" key="2">
    <source>
        <dbReference type="SAM" id="MobiDB-lite"/>
    </source>
</evidence>
<evidence type="ECO:0000305" key="3"/>
<evidence type="ECO:0007744" key="4">
    <source>
    </source>
</evidence>
<evidence type="ECO:0007744" key="5">
    <source>
    </source>
</evidence>
<evidence type="ECO:0007744" key="6">
    <source>
    </source>
</evidence>
<evidence type="ECO:0007744" key="7">
    <source>
    </source>
</evidence>
<evidence type="ECO:0007744" key="8">
    <source>
    </source>
</evidence>
<name>HXC10_HUMAN</name>
<reference key="1">
    <citation type="journal article" date="2000" name="J. Mol. Biol.">
        <title>Selection of homeotic proteins for binding to a human DNA replication origin.</title>
        <authorList>
            <person name="de Stanchina E."/>
            <person name="Gabellini D."/>
            <person name="Norio P."/>
            <person name="Giacca M."/>
            <person name="Peverali F.A."/>
            <person name="Riva S."/>
            <person name="Falaschi A."/>
            <person name="Biamonti G."/>
        </authorList>
    </citation>
    <scope>NUCLEOTIDE SEQUENCE [MRNA]</scope>
</reference>
<reference key="2">
    <citation type="journal article" date="2004" name="Genome Res.">
        <title>The status, quality, and expansion of the NIH full-length cDNA project: the Mammalian Gene Collection (MGC).</title>
        <authorList>
            <consortium name="The MGC Project Team"/>
        </authorList>
    </citation>
    <scope>NUCLEOTIDE SEQUENCE [LARGE SCALE MRNA]</scope>
    <source>
        <tissue>Cervix</tissue>
    </source>
</reference>
<reference key="3">
    <citation type="journal article" date="1997" name="FEBS Lett.">
        <title>Distinct patterns of all-trans retinoic acid dependent expression of HOXB and HOXC homeogenes in human embryonal and small-cell lung carcinoma cell lines.</title>
        <authorList>
            <person name="Flagiello D."/>
            <person name="Gibaud A."/>
            <person name="Dutrillaux B."/>
            <person name="Poupon M.-F."/>
            <person name="Malfoy B."/>
        </authorList>
    </citation>
    <scope>NUCLEOTIDE SEQUENCE [MRNA] OF 94-106 AND 258-297</scope>
</reference>
<reference key="4">
    <citation type="journal article" date="2008" name="Proc. Natl. Acad. Sci. U.S.A.">
        <title>A quantitative atlas of mitotic phosphorylation.</title>
        <authorList>
            <person name="Dephoure N."/>
            <person name="Zhou C."/>
            <person name="Villen J."/>
            <person name="Beausoleil S.A."/>
            <person name="Bakalarski C.E."/>
            <person name="Elledge S.J."/>
            <person name="Gygi S.P."/>
        </authorList>
    </citation>
    <scope>IDENTIFICATION BY MASS SPECTROMETRY [LARGE SCALE ANALYSIS]</scope>
    <source>
        <tissue>Cervix carcinoma</tissue>
    </source>
</reference>
<reference key="5">
    <citation type="journal article" date="2010" name="Sci. Signal.">
        <title>Quantitative phosphoproteomics reveals widespread full phosphorylation site occupancy during mitosis.</title>
        <authorList>
            <person name="Olsen J.V."/>
            <person name="Vermeulen M."/>
            <person name="Santamaria A."/>
            <person name="Kumar C."/>
            <person name="Miller M.L."/>
            <person name="Jensen L.J."/>
            <person name="Gnad F."/>
            <person name="Cox J."/>
            <person name="Jensen T.S."/>
            <person name="Nigg E.A."/>
            <person name="Brunak S."/>
            <person name="Mann M."/>
        </authorList>
    </citation>
    <scope>PHOSPHORYLATION [LARGE SCALE ANALYSIS] AT SER-189</scope>
    <scope>IDENTIFICATION BY MASS SPECTROMETRY [LARGE SCALE ANALYSIS]</scope>
    <source>
        <tissue>Cervix carcinoma</tissue>
    </source>
</reference>
<reference key="6">
    <citation type="journal article" date="2013" name="J. Proteome Res.">
        <title>Toward a comprehensive characterization of a human cancer cell phosphoproteome.</title>
        <authorList>
            <person name="Zhou H."/>
            <person name="Di Palma S."/>
            <person name="Preisinger C."/>
            <person name="Peng M."/>
            <person name="Polat A.N."/>
            <person name="Heck A.J."/>
            <person name="Mohammed S."/>
        </authorList>
    </citation>
    <scope>PHOSPHORYLATION [LARGE SCALE ANALYSIS] AT THR-8 AND SER-189</scope>
    <scope>IDENTIFICATION BY MASS SPECTROMETRY [LARGE SCALE ANALYSIS]</scope>
    <source>
        <tissue>Cervix carcinoma</tissue>
    </source>
</reference>
<reference key="7">
    <citation type="journal article" date="2014" name="Nat. Struct. Mol. Biol.">
        <title>Uncovering global SUMOylation signaling networks in a site-specific manner.</title>
        <authorList>
            <person name="Hendriks I.A."/>
            <person name="D'Souza R.C."/>
            <person name="Yang B."/>
            <person name="Verlaan-de Vries M."/>
            <person name="Mann M."/>
            <person name="Vertegaal A.C."/>
        </authorList>
    </citation>
    <scope>SUMOYLATION [LARGE SCALE ANALYSIS] AT LYS-254</scope>
    <scope>IDENTIFICATION BY MASS SPECTROMETRY [LARGE SCALE ANALYSIS]</scope>
</reference>
<reference key="8">
    <citation type="journal article" date="2015" name="Cell Rep.">
        <title>SUMO-2 orchestrates chromatin modifiers in response to DNA damage.</title>
        <authorList>
            <person name="Hendriks I.A."/>
            <person name="Treffers L.W."/>
            <person name="Verlaan-de Vries M."/>
            <person name="Olsen J.V."/>
            <person name="Vertegaal A.C."/>
        </authorList>
    </citation>
    <scope>SUMOYLATION [LARGE SCALE ANALYSIS] AT LYS-254</scope>
    <scope>IDENTIFICATION BY MASS SPECTROMETRY [LARGE SCALE ANALYSIS]</scope>
</reference>
<reference key="9">
    <citation type="journal article" date="2017" name="Nat. Struct. Mol. Biol.">
        <title>Site-specific mapping of the human SUMO proteome reveals co-modification with phosphorylation.</title>
        <authorList>
            <person name="Hendriks I.A."/>
            <person name="Lyon D."/>
            <person name="Young C."/>
            <person name="Jensen L.J."/>
            <person name="Vertegaal A.C."/>
            <person name="Nielsen M.L."/>
        </authorList>
    </citation>
    <scope>SUMOYLATION [LARGE SCALE ANALYSIS] AT LYS-106; LYS-195 AND LYS-254</scope>
    <scope>IDENTIFICATION BY MASS SPECTROMETRY [LARGE SCALE ANALYSIS]</scope>
</reference>
<gene>
    <name type="primary">HOXC10</name>
    <name type="synonym">HOX3I</name>
</gene>
<feature type="chain" id="PRO_0000200190" description="Homeobox protein Hox-C10">
    <location>
        <begin position="1"/>
        <end position="342"/>
    </location>
</feature>
<feature type="DNA-binding region" description="Homeobox" evidence="1">
    <location>
        <begin position="268"/>
        <end position="327"/>
    </location>
</feature>
<feature type="region of interest" description="Disordered" evidence="2">
    <location>
        <begin position="1"/>
        <end position="29"/>
    </location>
</feature>
<feature type="region of interest" description="Disordered" evidence="2">
    <location>
        <begin position="187"/>
        <end position="271"/>
    </location>
</feature>
<feature type="compositionally biased region" description="Polar residues" evidence="2">
    <location>
        <begin position="1"/>
        <end position="11"/>
    </location>
</feature>
<feature type="compositionally biased region" description="Polar residues" evidence="2">
    <location>
        <begin position="204"/>
        <end position="219"/>
    </location>
</feature>
<feature type="modified residue" description="Phosphothreonine" evidence="5">
    <location>
        <position position="8"/>
    </location>
</feature>
<feature type="modified residue" description="Phosphoserine" evidence="4 5">
    <location>
        <position position="189"/>
    </location>
</feature>
<feature type="cross-link" description="Glycyl lysine isopeptide (Lys-Gly) (interchain with G-Cter in SUMO2)" evidence="8">
    <location>
        <position position="106"/>
    </location>
</feature>
<feature type="cross-link" description="Glycyl lysine isopeptide (Lys-Gly) (interchain with G-Cter in SUMO2)" evidence="8">
    <location>
        <position position="195"/>
    </location>
</feature>
<feature type="cross-link" description="Glycyl lysine isopeptide (Lys-Gly) (interchain with G-Cter in SUMO2)" evidence="6 7 8">
    <location>
        <position position="254"/>
    </location>
</feature>
<feature type="sequence conflict" description="In Ref. 1; AAF67759." evidence="3" ref="1">
    <original>K</original>
    <variation>N</variation>
    <location>
        <position position="118"/>
    </location>
</feature>
<feature type="sequence conflict" description="In Ref. 3; CAA68000." evidence="3" ref="3">
    <original>A</original>
    <variation>G</variation>
    <location>
        <position position="265"/>
    </location>
</feature>
<feature type="sequence conflict" description="In Ref. 3; CAA68000." evidence="3" ref="3">
    <location>
        <position position="271"/>
    </location>
</feature>
<comment type="function">
    <text>Sequence-specific transcription factor which is part of a developmental regulatory system that provides cells with specific positional identities on the anterior-posterior axis.</text>
</comment>
<comment type="interaction">
    <interactant intactId="EBI-1188075">
        <id>Q9NYD6</id>
    </interactant>
    <interactant intactId="EBI-373242">
        <id>Q9UK80</id>
        <label>USP21</label>
    </interactant>
    <organismsDiffer>false</organismsDiffer>
    <experiments>3</experiments>
</comment>
<comment type="subcellular location">
    <subcellularLocation>
        <location>Nucleus</location>
    </subcellularLocation>
</comment>
<comment type="similarity">
    <text evidence="3">Belongs to the Abd-B homeobox family.</text>
</comment>
<sequence length="342" mass="38073">MTCPRNVTPNSYAEPLAAPGGGERYSRSAGMYMQSGSDFNCGVMRGCGLAPSLSKRDEGSSPSLALNTYPSYLSQLDSWGDPKAAYRLEQPVGRPLSSCSYPPSVKEENVCCMYSAEKRAKSGPEAALYSHPLPESCLGEHEVPVPSYYRASPSYSALDKTPHCSGANDFEAPFEQRASLNPRAEHLESPQLGGKVSFPETPKSDSQTPSPNEIKTEQSLAGPKGSPSESEKERAKAADSSPDTSDNEAKEEIKAENTTGNWLTAKSGRKKRCPYTKHQTLELEKEFLFNMYLTRERRLEISKTINLTDRQVKIWFQNRRMKLKKMNRENRIRELTSNFNFT</sequence>
<accession>Q9NYD6</accession>
<accession>O15219</accession>
<accession>O15220</accession>
<accession>Q9BVD5</accession>
<organism>
    <name type="scientific">Homo sapiens</name>
    <name type="common">Human</name>
    <dbReference type="NCBI Taxonomy" id="9606"/>
    <lineage>
        <taxon>Eukaryota</taxon>
        <taxon>Metazoa</taxon>
        <taxon>Chordata</taxon>
        <taxon>Craniata</taxon>
        <taxon>Vertebrata</taxon>
        <taxon>Euteleostomi</taxon>
        <taxon>Mammalia</taxon>
        <taxon>Eutheria</taxon>
        <taxon>Euarchontoglires</taxon>
        <taxon>Primates</taxon>
        <taxon>Haplorrhini</taxon>
        <taxon>Catarrhini</taxon>
        <taxon>Hominidae</taxon>
        <taxon>Homo</taxon>
    </lineage>
</organism>
<protein>
    <recommendedName>
        <fullName>Homeobox protein Hox-C10</fullName>
    </recommendedName>
    <alternativeName>
        <fullName>Homeobox protein Hox-3I</fullName>
    </alternativeName>
</protein>
<dbReference type="EMBL" id="AF255675">
    <property type="protein sequence ID" value="AAF67759.1"/>
    <property type="molecule type" value="mRNA"/>
</dbReference>
<dbReference type="EMBL" id="BC001293">
    <property type="protein sequence ID" value="AAH01293.1"/>
    <property type="molecule type" value="mRNA"/>
</dbReference>
<dbReference type="EMBL" id="X99684">
    <property type="protein sequence ID" value="CAA67999.1"/>
    <property type="molecule type" value="mRNA"/>
</dbReference>
<dbReference type="EMBL" id="X99685">
    <property type="protein sequence ID" value="CAA68000.1"/>
    <property type="molecule type" value="mRNA"/>
</dbReference>
<dbReference type="CCDS" id="CCDS8868.1"/>
<dbReference type="PIR" id="B60941">
    <property type="entry name" value="B60941"/>
</dbReference>
<dbReference type="RefSeq" id="NP_059105.2">
    <property type="nucleotide sequence ID" value="NM_017409.3"/>
</dbReference>
<dbReference type="SMR" id="Q9NYD6"/>
<dbReference type="BioGRID" id="109466">
    <property type="interactions" value="22"/>
</dbReference>
<dbReference type="FunCoup" id="Q9NYD6">
    <property type="interactions" value="1074"/>
</dbReference>
<dbReference type="IntAct" id="Q9NYD6">
    <property type="interactions" value="11"/>
</dbReference>
<dbReference type="STRING" id="9606.ENSP00000307321"/>
<dbReference type="GlyCosmos" id="Q9NYD6">
    <property type="glycosylation" value="1 site, 1 glycan"/>
</dbReference>
<dbReference type="GlyGen" id="Q9NYD6">
    <property type="glycosylation" value="4 sites, 1 O-linked glycan (3 sites)"/>
</dbReference>
<dbReference type="iPTMnet" id="Q9NYD6"/>
<dbReference type="PhosphoSitePlus" id="Q9NYD6"/>
<dbReference type="BioMuta" id="HOXC10"/>
<dbReference type="jPOST" id="Q9NYD6"/>
<dbReference type="MassIVE" id="Q9NYD6"/>
<dbReference type="PaxDb" id="9606-ENSP00000307321"/>
<dbReference type="PeptideAtlas" id="Q9NYD6"/>
<dbReference type="ProteomicsDB" id="83216"/>
<dbReference type="Pumba" id="Q9NYD6"/>
<dbReference type="Antibodypedia" id="15311">
    <property type="antibodies" value="447 antibodies from 33 providers"/>
</dbReference>
<dbReference type="DNASU" id="3226"/>
<dbReference type="Ensembl" id="ENST00000303460.5">
    <property type="protein sequence ID" value="ENSP00000307321.4"/>
    <property type="gene ID" value="ENSG00000180818.5"/>
</dbReference>
<dbReference type="GeneID" id="3226"/>
<dbReference type="KEGG" id="hsa:3226"/>
<dbReference type="MANE-Select" id="ENST00000303460.5">
    <property type="protein sequence ID" value="ENSP00000307321.4"/>
    <property type="RefSeq nucleotide sequence ID" value="NM_017409.4"/>
    <property type="RefSeq protein sequence ID" value="NP_059105.2"/>
</dbReference>
<dbReference type="UCSC" id="uc001sen.4">
    <property type="organism name" value="human"/>
</dbReference>
<dbReference type="AGR" id="HGNC:5122"/>
<dbReference type="CTD" id="3226"/>
<dbReference type="DisGeNET" id="3226"/>
<dbReference type="GeneCards" id="HOXC10"/>
<dbReference type="HGNC" id="HGNC:5122">
    <property type="gene designation" value="HOXC10"/>
</dbReference>
<dbReference type="HPA" id="ENSG00000180818">
    <property type="expression patterns" value="Tissue enriched (skeletal)"/>
</dbReference>
<dbReference type="MIM" id="605560">
    <property type="type" value="gene"/>
</dbReference>
<dbReference type="neXtProt" id="NX_Q9NYD6"/>
<dbReference type="OpenTargets" id="ENSG00000180818"/>
<dbReference type="PharmGKB" id="PA29397"/>
<dbReference type="VEuPathDB" id="HostDB:ENSG00000180818"/>
<dbReference type="eggNOG" id="KOG0487">
    <property type="taxonomic scope" value="Eukaryota"/>
</dbReference>
<dbReference type="GeneTree" id="ENSGT00940000160855"/>
<dbReference type="HOGENOM" id="CLU_057871_0_0_1"/>
<dbReference type="InParanoid" id="Q9NYD6"/>
<dbReference type="OMA" id="MYMQSGN"/>
<dbReference type="OrthoDB" id="6159439at2759"/>
<dbReference type="PAN-GO" id="Q9NYD6">
    <property type="GO annotations" value="4 GO annotations based on evolutionary models"/>
</dbReference>
<dbReference type="PhylomeDB" id="Q9NYD6"/>
<dbReference type="TreeFam" id="TF317819"/>
<dbReference type="PathwayCommons" id="Q9NYD6"/>
<dbReference type="SignaLink" id="Q9NYD6"/>
<dbReference type="SIGNOR" id="Q9NYD6"/>
<dbReference type="BioGRID-ORCS" id="3226">
    <property type="hits" value="135 hits in 1170 CRISPR screens"/>
</dbReference>
<dbReference type="GeneWiki" id="HOXC10"/>
<dbReference type="GenomeRNAi" id="3226"/>
<dbReference type="Pharos" id="Q9NYD6">
    <property type="development level" value="Tbio"/>
</dbReference>
<dbReference type="PRO" id="PR:Q9NYD6"/>
<dbReference type="Proteomes" id="UP000005640">
    <property type="component" value="Chromosome 12"/>
</dbReference>
<dbReference type="RNAct" id="Q9NYD6">
    <property type="molecule type" value="protein"/>
</dbReference>
<dbReference type="Bgee" id="ENSG00000180818">
    <property type="expression patterns" value="Expressed in gastrocnemius and 118 other cell types or tissues"/>
</dbReference>
<dbReference type="ExpressionAtlas" id="Q9NYD6">
    <property type="expression patterns" value="baseline and differential"/>
</dbReference>
<dbReference type="GO" id="GO:0000785">
    <property type="term" value="C:chromatin"/>
    <property type="evidence" value="ECO:0000247"/>
    <property type="project" value="NTNU_SB"/>
</dbReference>
<dbReference type="GO" id="GO:0016604">
    <property type="term" value="C:nuclear body"/>
    <property type="evidence" value="ECO:0000314"/>
    <property type="project" value="HPA"/>
</dbReference>
<dbReference type="GO" id="GO:0005654">
    <property type="term" value="C:nucleoplasm"/>
    <property type="evidence" value="ECO:0000314"/>
    <property type="project" value="HPA"/>
</dbReference>
<dbReference type="GO" id="GO:0005634">
    <property type="term" value="C:nucleus"/>
    <property type="evidence" value="ECO:0000318"/>
    <property type="project" value="GO_Central"/>
</dbReference>
<dbReference type="GO" id="GO:0001228">
    <property type="term" value="F:DNA-binding transcription activator activity, RNA polymerase II-specific"/>
    <property type="evidence" value="ECO:0000314"/>
    <property type="project" value="NTNU_SB"/>
</dbReference>
<dbReference type="GO" id="GO:0000981">
    <property type="term" value="F:DNA-binding transcription factor activity, RNA polymerase II-specific"/>
    <property type="evidence" value="ECO:0000247"/>
    <property type="project" value="NTNU_SB"/>
</dbReference>
<dbReference type="GO" id="GO:0000978">
    <property type="term" value="F:RNA polymerase II cis-regulatory region sequence-specific DNA binding"/>
    <property type="evidence" value="ECO:0000318"/>
    <property type="project" value="GO_Central"/>
</dbReference>
<dbReference type="GO" id="GO:0000977">
    <property type="term" value="F:RNA polymerase II transcription regulatory region sequence-specific DNA binding"/>
    <property type="evidence" value="ECO:0000314"/>
    <property type="project" value="NTNU_SB"/>
</dbReference>
<dbReference type="GO" id="GO:1990837">
    <property type="term" value="F:sequence-specific double-stranded DNA binding"/>
    <property type="evidence" value="ECO:0000314"/>
    <property type="project" value="ARUK-UCL"/>
</dbReference>
<dbReference type="GO" id="GO:0009952">
    <property type="term" value="P:anterior/posterior pattern specification"/>
    <property type="evidence" value="ECO:0007669"/>
    <property type="project" value="Ensembl"/>
</dbReference>
<dbReference type="GO" id="GO:0030326">
    <property type="term" value="P:embryonic limb morphogenesis"/>
    <property type="evidence" value="ECO:0007669"/>
    <property type="project" value="Ensembl"/>
</dbReference>
<dbReference type="GO" id="GO:0120163">
    <property type="term" value="P:negative regulation of cold-induced thermogenesis"/>
    <property type="evidence" value="ECO:0000315"/>
    <property type="project" value="YuBioLab"/>
</dbReference>
<dbReference type="GO" id="GO:0050905">
    <property type="term" value="P:neuromuscular process"/>
    <property type="evidence" value="ECO:0007669"/>
    <property type="project" value="Ensembl"/>
</dbReference>
<dbReference type="GO" id="GO:0008284">
    <property type="term" value="P:positive regulation of cell population proliferation"/>
    <property type="evidence" value="ECO:0000304"/>
    <property type="project" value="ProtInc"/>
</dbReference>
<dbReference type="GO" id="GO:0045944">
    <property type="term" value="P:positive regulation of transcription by RNA polymerase II"/>
    <property type="evidence" value="ECO:0000314"/>
    <property type="project" value="NTNU_SB"/>
</dbReference>
<dbReference type="GO" id="GO:0009954">
    <property type="term" value="P:proximal/distal pattern formation"/>
    <property type="evidence" value="ECO:0007669"/>
    <property type="project" value="Ensembl"/>
</dbReference>
<dbReference type="GO" id="GO:0006357">
    <property type="term" value="P:regulation of transcription by RNA polymerase II"/>
    <property type="evidence" value="ECO:0000318"/>
    <property type="project" value="GO_Central"/>
</dbReference>
<dbReference type="GO" id="GO:0001501">
    <property type="term" value="P:skeletal system development"/>
    <property type="evidence" value="ECO:0007669"/>
    <property type="project" value="Ensembl"/>
</dbReference>
<dbReference type="GO" id="GO:0021520">
    <property type="term" value="P:spinal cord motor neuron cell fate specification"/>
    <property type="evidence" value="ECO:0007669"/>
    <property type="project" value="Ensembl"/>
</dbReference>
<dbReference type="CDD" id="cd00086">
    <property type="entry name" value="homeodomain"/>
    <property type="match status" value="1"/>
</dbReference>
<dbReference type="FunFam" id="1.10.10.60:FF:000018">
    <property type="entry name" value="Homeobox A10"/>
    <property type="match status" value="1"/>
</dbReference>
<dbReference type="Gene3D" id="1.10.10.60">
    <property type="entry name" value="Homeodomain-like"/>
    <property type="match status" value="1"/>
</dbReference>
<dbReference type="InterPro" id="IPR001356">
    <property type="entry name" value="HD"/>
</dbReference>
<dbReference type="InterPro" id="IPR020479">
    <property type="entry name" value="HD_metazoa"/>
</dbReference>
<dbReference type="InterPro" id="IPR017970">
    <property type="entry name" value="Homeobox_CS"/>
</dbReference>
<dbReference type="InterPro" id="IPR009057">
    <property type="entry name" value="Homeodomain-like_sf"/>
</dbReference>
<dbReference type="InterPro" id="IPR046333">
    <property type="entry name" value="HXA10/ABDB-like"/>
</dbReference>
<dbReference type="PANTHER" id="PTHR45874">
    <property type="entry name" value="HOMEOBOX PROTEIN ABDOMINAL-B"/>
    <property type="match status" value="1"/>
</dbReference>
<dbReference type="PANTHER" id="PTHR45874:SF2">
    <property type="entry name" value="HOMEOBOX PROTEIN HOX-C10"/>
    <property type="match status" value="1"/>
</dbReference>
<dbReference type="Pfam" id="PF00046">
    <property type="entry name" value="Homeodomain"/>
    <property type="match status" value="1"/>
</dbReference>
<dbReference type="PRINTS" id="PR00024">
    <property type="entry name" value="HOMEOBOX"/>
</dbReference>
<dbReference type="SMART" id="SM00389">
    <property type="entry name" value="HOX"/>
    <property type="match status" value="1"/>
</dbReference>
<dbReference type="SUPFAM" id="SSF46689">
    <property type="entry name" value="Homeodomain-like"/>
    <property type="match status" value="1"/>
</dbReference>
<dbReference type="PROSITE" id="PS00027">
    <property type="entry name" value="HOMEOBOX_1"/>
    <property type="match status" value="1"/>
</dbReference>
<dbReference type="PROSITE" id="PS50071">
    <property type="entry name" value="HOMEOBOX_2"/>
    <property type="match status" value="1"/>
</dbReference>
<proteinExistence type="evidence at protein level"/>
<keyword id="KW-0217">Developmental protein</keyword>
<keyword id="KW-0238">DNA-binding</keyword>
<keyword id="KW-0371">Homeobox</keyword>
<keyword id="KW-1017">Isopeptide bond</keyword>
<keyword id="KW-0539">Nucleus</keyword>
<keyword id="KW-0597">Phosphoprotein</keyword>
<keyword id="KW-1267">Proteomics identification</keyword>
<keyword id="KW-1185">Reference proteome</keyword>
<keyword id="KW-0804">Transcription</keyword>
<keyword id="KW-0805">Transcription regulation</keyword>
<keyword id="KW-0832">Ubl conjugation</keyword>